<name>NADK_RHOOB</name>
<reference key="1">
    <citation type="submission" date="2009-03" db="EMBL/GenBank/DDBJ databases">
        <title>Comparison of the complete genome sequences of Rhodococcus erythropolis PR4 and Rhodococcus opacus B4.</title>
        <authorList>
            <person name="Takarada H."/>
            <person name="Sekine M."/>
            <person name="Hosoyama A."/>
            <person name="Yamada R."/>
            <person name="Fujisawa T."/>
            <person name="Omata S."/>
            <person name="Shimizu A."/>
            <person name="Tsukatani N."/>
            <person name="Tanikawa S."/>
            <person name="Fujita N."/>
            <person name="Harayama S."/>
        </authorList>
    </citation>
    <scope>NUCLEOTIDE SEQUENCE [LARGE SCALE GENOMIC DNA]</scope>
    <source>
        <strain>B4</strain>
    </source>
</reference>
<protein>
    <recommendedName>
        <fullName evidence="1">NAD kinase</fullName>
        <ecNumber evidence="1">2.7.1.23</ecNumber>
    </recommendedName>
    <alternativeName>
        <fullName evidence="1">ATP-dependent NAD kinase</fullName>
    </alternativeName>
</protein>
<gene>
    <name evidence="1" type="primary">nadK</name>
    <name type="ordered locus">ROP_06680</name>
</gene>
<keyword id="KW-0067">ATP-binding</keyword>
<keyword id="KW-0963">Cytoplasm</keyword>
<keyword id="KW-0418">Kinase</keyword>
<keyword id="KW-0520">NAD</keyword>
<keyword id="KW-0521">NADP</keyword>
<keyword id="KW-0547">Nucleotide-binding</keyword>
<keyword id="KW-0808">Transferase</keyword>
<sequence>MSGGSSGGQQREREILLVAHPGRAEITETARRVGKIFERAGIGMRVLVDEVDSTRIEPMDGMAADEFLVPGLEVTIVQAGPDAALGCEMVLVLGGDGTFLRAAELAQAASIPVLGINLGRIGFLAETEAEHLDEALGQVVRREYRIEHRMTLDVLVRVDDEIIERGWALNEASIENRSRLGVLEVVLEVDGRPVSAFGCDGVLISTPTGSTAYAFSAGGPVVWPELEALLVVPSNAHALFARPLVTSPESLIAVETVAGSHDGLVFCDGRRTLELPAGARVEVVRGKEPVRWVRLDSAPFADRMVRKFELPVTGWRGRKP</sequence>
<evidence type="ECO:0000255" key="1">
    <source>
        <dbReference type="HAMAP-Rule" id="MF_00361"/>
    </source>
</evidence>
<organism>
    <name type="scientific">Rhodococcus opacus (strain B4)</name>
    <dbReference type="NCBI Taxonomy" id="632772"/>
    <lineage>
        <taxon>Bacteria</taxon>
        <taxon>Bacillati</taxon>
        <taxon>Actinomycetota</taxon>
        <taxon>Actinomycetes</taxon>
        <taxon>Mycobacteriales</taxon>
        <taxon>Nocardiaceae</taxon>
        <taxon>Rhodococcus</taxon>
    </lineage>
</organism>
<dbReference type="EC" id="2.7.1.23" evidence="1"/>
<dbReference type="EMBL" id="AP011115">
    <property type="protein sequence ID" value="BAH48915.1"/>
    <property type="molecule type" value="Genomic_DNA"/>
</dbReference>
<dbReference type="RefSeq" id="WP_012687918.1">
    <property type="nucleotide sequence ID" value="NC_012522.1"/>
</dbReference>
<dbReference type="SMR" id="C1ASY3"/>
<dbReference type="STRING" id="632772.ROP_06680"/>
<dbReference type="KEGG" id="rop:ROP_06680"/>
<dbReference type="PATRIC" id="fig|632772.20.peg.728"/>
<dbReference type="HOGENOM" id="CLU_008831_0_0_11"/>
<dbReference type="OrthoDB" id="9774737at2"/>
<dbReference type="Proteomes" id="UP000002212">
    <property type="component" value="Chromosome"/>
</dbReference>
<dbReference type="GO" id="GO:0005737">
    <property type="term" value="C:cytoplasm"/>
    <property type="evidence" value="ECO:0007669"/>
    <property type="project" value="UniProtKB-SubCell"/>
</dbReference>
<dbReference type="GO" id="GO:0005524">
    <property type="term" value="F:ATP binding"/>
    <property type="evidence" value="ECO:0007669"/>
    <property type="project" value="UniProtKB-KW"/>
</dbReference>
<dbReference type="GO" id="GO:0046872">
    <property type="term" value="F:metal ion binding"/>
    <property type="evidence" value="ECO:0007669"/>
    <property type="project" value="UniProtKB-UniRule"/>
</dbReference>
<dbReference type="GO" id="GO:0051287">
    <property type="term" value="F:NAD binding"/>
    <property type="evidence" value="ECO:0007669"/>
    <property type="project" value="UniProtKB-ARBA"/>
</dbReference>
<dbReference type="GO" id="GO:0003951">
    <property type="term" value="F:NAD+ kinase activity"/>
    <property type="evidence" value="ECO:0007669"/>
    <property type="project" value="UniProtKB-UniRule"/>
</dbReference>
<dbReference type="GO" id="GO:0019674">
    <property type="term" value="P:NAD metabolic process"/>
    <property type="evidence" value="ECO:0007669"/>
    <property type="project" value="InterPro"/>
</dbReference>
<dbReference type="GO" id="GO:0006741">
    <property type="term" value="P:NADP biosynthetic process"/>
    <property type="evidence" value="ECO:0007669"/>
    <property type="project" value="UniProtKB-UniRule"/>
</dbReference>
<dbReference type="FunFam" id="2.60.200.30:FF:000007">
    <property type="entry name" value="NAD kinase"/>
    <property type="match status" value="1"/>
</dbReference>
<dbReference type="Gene3D" id="3.40.50.10330">
    <property type="entry name" value="Probable inorganic polyphosphate/atp-NAD kinase, domain 1"/>
    <property type="match status" value="1"/>
</dbReference>
<dbReference type="Gene3D" id="2.60.200.30">
    <property type="entry name" value="Probable inorganic polyphosphate/atp-NAD kinase, domain 2"/>
    <property type="match status" value="1"/>
</dbReference>
<dbReference type="HAMAP" id="MF_00361">
    <property type="entry name" value="NAD_kinase"/>
    <property type="match status" value="1"/>
</dbReference>
<dbReference type="InterPro" id="IPR017438">
    <property type="entry name" value="ATP-NAD_kinase_N"/>
</dbReference>
<dbReference type="InterPro" id="IPR017437">
    <property type="entry name" value="ATP-NAD_kinase_PpnK-typ_C"/>
</dbReference>
<dbReference type="InterPro" id="IPR016064">
    <property type="entry name" value="NAD/diacylglycerol_kinase_sf"/>
</dbReference>
<dbReference type="InterPro" id="IPR002504">
    <property type="entry name" value="NADK"/>
</dbReference>
<dbReference type="NCBIfam" id="NF002892">
    <property type="entry name" value="PRK03372.1"/>
    <property type="match status" value="1"/>
</dbReference>
<dbReference type="PANTHER" id="PTHR20275">
    <property type="entry name" value="NAD KINASE"/>
    <property type="match status" value="1"/>
</dbReference>
<dbReference type="PANTHER" id="PTHR20275:SF0">
    <property type="entry name" value="NAD KINASE"/>
    <property type="match status" value="1"/>
</dbReference>
<dbReference type="Pfam" id="PF01513">
    <property type="entry name" value="NAD_kinase"/>
    <property type="match status" value="1"/>
</dbReference>
<dbReference type="Pfam" id="PF20143">
    <property type="entry name" value="NAD_kinase_C"/>
    <property type="match status" value="1"/>
</dbReference>
<dbReference type="SUPFAM" id="SSF111331">
    <property type="entry name" value="NAD kinase/diacylglycerol kinase-like"/>
    <property type="match status" value="1"/>
</dbReference>
<comment type="function">
    <text evidence="1">Involved in the regulation of the intracellular balance of NAD and NADP, and is a key enzyme in the biosynthesis of NADP. Catalyzes specifically the phosphorylation on 2'-hydroxyl of the adenosine moiety of NAD to yield NADP.</text>
</comment>
<comment type="catalytic activity">
    <reaction evidence="1">
        <text>NAD(+) + ATP = ADP + NADP(+) + H(+)</text>
        <dbReference type="Rhea" id="RHEA:18629"/>
        <dbReference type="ChEBI" id="CHEBI:15378"/>
        <dbReference type="ChEBI" id="CHEBI:30616"/>
        <dbReference type="ChEBI" id="CHEBI:57540"/>
        <dbReference type="ChEBI" id="CHEBI:58349"/>
        <dbReference type="ChEBI" id="CHEBI:456216"/>
        <dbReference type="EC" id="2.7.1.23"/>
    </reaction>
</comment>
<comment type="cofactor">
    <cofactor evidence="1">
        <name>a divalent metal cation</name>
        <dbReference type="ChEBI" id="CHEBI:60240"/>
    </cofactor>
</comment>
<comment type="subcellular location">
    <subcellularLocation>
        <location evidence="1">Cytoplasm</location>
    </subcellularLocation>
</comment>
<comment type="similarity">
    <text evidence="1">Belongs to the NAD kinase family.</text>
</comment>
<proteinExistence type="inferred from homology"/>
<accession>C1ASY3</accession>
<feature type="chain" id="PRO_1000133578" description="NAD kinase">
    <location>
        <begin position="1"/>
        <end position="320"/>
    </location>
</feature>
<feature type="active site" description="Proton acceptor" evidence="1">
    <location>
        <position position="96"/>
    </location>
</feature>
<feature type="binding site" evidence="1">
    <location>
        <begin position="96"/>
        <end position="97"/>
    </location>
    <ligand>
        <name>NAD(+)</name>
        <dbReference type="ChEBI" id="CHEBI:57540"/>
    </ligand>
</feature>
<feature type="binding site" evidence="1">
    <location>
        <position position="101"/>
    </location>
    <ligand>
        <name>NAD(+)</name>
        <dbReference type="ChEBI" id="CHEBI:57540"/>
    </ligand>
</feature>
<feature type="binding site" evidence="1">
    <location>
        <begin position="170"/>
        <end position="171"/>
    </location>
    <ligand>
        <name>NAD(+)</name>
        <dbReference type="ChEBI" id="CHEBI:57540"/>
    </ligand>
</feature>
<feature type="binding site" evidence="1">
    <location>
        <position position="200"/>
    </location>
    <ligand>
        <name>NAD(+)</name>
        <dbReference type="ChEBI" id="CHEBI:57540"/>
    </ligand>
</feature>
<feature type="binding site" evidence="1">
    <location>
        <begin position="211"/>
        <end position="216"/>
    </location>
    <ligand>
        <name>NAD(+)</name>
        <dbReference type="ChEBI" id="CHEBI:57540"/>
    </ligand>
</feature>